<comment type="function">
    <text evidence="6">Possesses GTPase activator activity towards RAB32, RAB33B and RAB38. Regulates the trafficking of melanogenic enzymes TYR, TYRP1 and DCT/TYRP2 to melanosomes in melanocytes by inactivating RAB32 and RAB38. Inhibits RAB32 and RAB38 activation both directly by promoting their GTPase activity and indirectly by disrupting the RAB9A-HPS4 interaction which is required for RAB32/38 activation (PubMed:26620560).</text>
</comment>
<comment type="subunit">
    <text evidence="1">Interacts with RAB4A, RAB11A, RAP1A, RAP1B, RAP2A and RAP2B. No interaction with RAB27A. Interacts with RAB9A (By similarity).</text>
</comment>
<comment type="subcellular location">
    <subcellularLocation>
        <location evidence="1">Cytoplasm</location>
    </subcellularLocation>
    <subcellularLocation>
        <location evidence="6">Melanosome</location>
    </subcellularLocation>
    <text evidence="1">Melanosomal localization is mediated by RAB9A.</text>
</comment>
<comment type="alternative products">
    <event type="alternative splicing"/>
    <isoform>
        <id>Q80U12-1</id>
        <name>1</name>
        <sequence type="displayed"/>
    </isoform>
    <isoform>
        <id>Q80U12-2</id>
        <name>2</name>
        <sequence type="described" ref="VSP_024599"/>
    </isoform>
</comment>
<comment type="tissue specificity">
    <text evidence="5">Widely expressed.</text>
</comment>
<comment type="domain">
    <text evidence="1">The Rab-GAP TBC domain possesses GTPase activator activity.</text>
</comment>
<comment type="similarity">
    <text evidence="7">Belongs to the RUTBC family.</text>
</comment>
<comment type="sequence caution" evidence="7">
    <conflict type="frameshift">
        <sequence resource="EMBL-CDS" id="AAH58414"/>
    </conflict>
</comment>
<comment type="sequence caution" evidence="7">
    <conflict type="frameshift">
        <sequence resource="EMBL-CDS" id="AAH60163"/>
    </conflict>
</comment>
<comment type="sequence caution" evidence="7">
    <conflict type="erroneous initiation">
        <sequence resource="EMBL-CDS" id="BAC65555"/>
    </conflict>
</comment>
<evidence type="ECO:0000250" key="1">
    <source>
        <dbReference type="UniProtKB" id="O43147"/>
    </source>
</evidence>
<evidence type="ECO:0000255" key="2">
    <source>
        <dbReference type="PROSITE-ProRule" id="PRU00163"/>
    </source>
</evidence>
<evidence type="ECO:0000255" key="3">
    <source>
        <dbReference type="PROSITE-ProRule" id="PRU00178"/>
    </source>
</evidence>
<evidence type="ECO:0000256" key="4">
    <source>
        <dbReference type="SAM" id="MobiDB-lite"/>
    </source>
</evidence>
<evidence type="ECO:0000269" key="5">
    <source>
    </source>
</evidence>
<evidence type="ECO:0000269" key="6">
    <source>
    </source>
</evidence>
<evidence type="ECO:0000305" key="7"/>
<evidence type="ECO:0007744" key="8">
    <source>
    </source>
</evidence>
<proteinExistence type="evidence at protein level"/>
<feature type="chain" id="PRO_0000284663" description="Small G protein signaling modulator 2">
    <location>
        <begin position="1"/>
        <end position="1005"/>
    </location>
</feature>
<feature type="domain" description="RUN" evidence="3">
    <location>
        <begin position="34"/>
        <end position="191"/>
    </location>
</feature>
<feature type="domain" description="Rab-GAP TBC" evidence="2">
    <location>
        <begin position="566"/>
        <end position="938"/>
    </location>
</feature>
<feature type="region of interest" description="Disordered" evidence="4">
    <location>
        <begin position="95"/>
        <end position="121"/>
    </location>
</feature>
<feature type="region of interest" description="Disordered" evidence="4">
    <location>
        <begin position="205"/>
        <end position="236"/>
    </location>
</feature>
<feature type="region of interest" description="Disordered" evidence="4">
    <location>
        <begin position="657"/>
        <end position="687"/>
    </location>
</feature>
<feature type="region of interest" description="Disordered" evidence="4">
    <location>
        <begin position="729"/>
        <end position="761"/>
    </location>
</feature>
<feature type="compositionally biased region" description="Basic and acidic residues" evidence="4">
    <location>
        <begin position="672"/>
        <end position="681"/>
    </location>
</feature>
<feature type="compositionally biased region" description="Acidic residues" evidence="4">
    <location>
        <begin position="730"/>
        <end position="740"/>
    </location>
</feature>
<feature type="modified residue" description="Phosphoserine" evidence="8">
    <location>
        <position position="402"/>
    </location>
</feature>
<feature type="splice variant" id="VSP_024599" description="In isoform 2." evidence="7">
    <original>N</original>
    <variation>ITINYHHLAASRAASVDDDEEEEDKLHAMLSMICSRNLTAPNPMKD</variation>
    <location>
        <position position="430"/>
    </location>
</feature>
<feature type="modified residue" description="Phosphoserine" evidence="8">
    <location sequence="Q80U12-2">
        <position position="444"/>
    </location>
</feature>
<name>SGSM2_MOUSE</name>
<keyword id="KW-0025">Alternative splicing</keyword>
<keyword id="KW-0963">Cytoplasm</keyword>
<keyword id="KW-0343">GTPase activation</keyword>
<keyword id="KW-0597">Phosphoprotein</keyword>
<keyword id="KW-1185">Reference proteome</keyword>
<accession>Q80U12</accession>
<accession>Q5SWE0</accession>
<accession>Q5SWE1</accession>
<accession>Q6PAP8</accession>
<organism>
    <name type="scientific">Mus musculus</name>
    <name type="common">Mouse</name>
    <dbReference type="NCBI Taxonomy" id="10090"/>
    <lineage>
        <taxon>Eukaryota</taxon>
        <taxon>Metazoa</taxon>
        <taxon>Chordata</taxon>
        <taxon>Craniata</taxon>
        <taxon>Vertebrata</taxon>
        <taxon>Euteleostomi</taxon>
        <taxon>Mammalia</taxon>
        <taxon>Eutheria</taxon>
        <taxon>Euarchontoglires</taxon>
        <taxon>Glires</taxon>
        <taxon>Rodentia</taxon>
        <taxon>Myomorpha</taxon>
        <taxon>Muroidea</taxon>
        <taxon>Muridae</taxon>
        <taxon>Murinae</taxon>
        <taxon>Mus</taxon>
        <taxon>Mus</taxon>
    </lineage>
</organism>
<protein>
    <recommendedName>
        <fullName>Small G protein signaling modulator 2</fullName>
    </recommendedName>
    <alternativeName>
        <fullName>RUN and TBC1 domain-containing protein 1</fullName>
    </alternativeName>
</protein>
<dbReference type="EMBL" id="AK122273">
    <property type="protein sequence ID" value="BAC65555.1"/>
    <property type="status" value="ALT_INIT"/>
    <property type="molecule type" value="mRNA"/>
</dbReference>
<dbReference type="EMBL" id="AL604066">
    <property type="status" value="NOT_ANNOTATED_CDS"/>
    <property type="molecule type" value="Genomic_DNA"/>
</dbReference>
<dbReference type="EMBL" id="BC058414">
    <property type="protein sequence ID" value="AAH58414.1"/>
    <property type="status" value="ALT_FRAME"/>
    <property type="molecule type" value="mRNA"/>
</dbReference>
<dbReference type="EMBL" id="BC060163">
    <property type="protein sequence ID" value="AAH60163.1"/>
    <property type="status" value="ALT_FRAME"/>
    <property type="molecule type" value="mRNA"/>
</dbReference>
<dbReference type="CCDS" id="CCDS36224.1">
    <molecule id="Q80U12-1"/>
</dbReference>
<dbReference type="CCDS" id="CCDS88189.1">
    <molecule id="Q80U12-2"/>
</dbReference>
<dbReference type="RefSeq" id="NP_001361617.1">
    <molecule id="Q80U12-2"/>
    <property type="nucleotide sequence ID" value="NM_001374688.1"/>
</dbReference>
<dbReference type="RefSeq" id="NP_922934.2">
    <molecule id="Q80U12-1"/>
    <property type="nucleotide sequence ID" value="NM_197943.3"/>
</dbReference>
<dbReference type="RefSeq" id="XP_006534644.1">
    <property type="nucleotide sequence ID" value="XM_006534581.3"/>
</dbReference>
<dbReference type="SMR" id="Q80U12"/>
<dbReference type="BioGRID" id="220852">
    <property type="interactions" value="3"/>
</dbReference>
<dbReference type="DIP" id="DIP-61071N"/>
<dbReference type="FunCoup" id="Q80U12">
    <property type="interactions" value="874"/>
</dbReference>
<dbReference type="IntAct" id="Q80U12">
    <property type="interactions" value="2"/>
</dbReference>
<dbReference type="STRING" id="10090.ENSMUSP00000050496"/>
<dbReference type="GlyGen" id="Q80U12">
    <property type="glycosylation" value="4 sites, 1 O-linked glycan (2 sites)"/>
</dbReference>
<dbReference type="iPTMnet" id="Q80U12"/>
<dbReference type="PhosphoSitePlus" id="Q80U12"/>
<dbReference type="SwissPalm" id="Q80U12"/>
<dbReference type="PaxDb" id="10090-ENSMUSP00000050496"/>
<dbReference type="PeptideAtlas" id="Q80U12"/>
<dbReference type="ProteomicsDB" id="256991">
    <molecule id="Q80U12-1"/>
</dbReference>
<dbReference type="ProteomicsDB" id="256992">
    <molecule id="Q80U12-2"/>
</dbReference>
<dbReference type="Antibodypedia" id="10736">
    <property type="antibodies" value="72 antibodies from 21 providers"/>
</dbReference>
<dbReference type="DNASU" id="97761"/>
<dbReference type="Ensembl" id="ENSMUST00000057631.12">
    <molecule id="Q80U12-1"/>
    <property type="protein sequence ID" value="ENSMUSP00000050496.6"/>
    <property type="gene ID" value="ENSMUSG00000038351.15"/>
</dbReference>
<dbReference type="Ensembl" id="ENSMUST00000081799.6">
    <molecule id="Q80U12-2"/>
    <property type="protein sequence ID" value="ENSMUSP00000080489.6"/>
    <property type="gene ID" value="ENSMUSG00000038351.15"/>
</dbReference>
<dbReference type="GeneID" id="97761"/>
<dbReference type="KEGG" id="mmu:97761"/>
<dbReference type="UCSC" id="uc007kck.1">
    <molecule id="Q80U12-1"/>
    <property type="organism name" value="mouse"/>
</dbReference>
<dbReference type="AGR" id="MGI:2144695"/>
<dbReference type="CTD" id="9905"/>
<dbReference type="MGI" id="MGI:2144695">
    <property type="gene designation" value="Sgsm2"/>
</dbReference>
<dbReference type="VEuPathDB" id="HostDB:ENSMUSG00000038351"/>
<dbReference type="eggNOG" id="KOG1648">
    <property type="taxonomic scope" value="Eukaryota"/>
</dbReference>
<dbReference type="GeneTree" id="ENSGT00940000159315"/>
<dbReference type="HOGENOM" id="CLU_006235_0_0_1"/>
<dbReference type="InParanoid" id="Q80U12"/>
<dbReference type="OMA" id="CHRSHCH"/>
<dbReference type="OrthoDB" id="10264062at2759"/>
<dbReference type="PhylomeDB" id="Q80U12"/>
<dbReference type="TreeFam" id="TF318216"/>
<dbReference type="BioGRID-ORCS" id="97761">
    <property type="hits" value="4 hits in 77 CRISPR screens"/>
</dbReference>
<dbReference type="ChiTaRS" id="Sgsm2">
    <property type="organism name" value="mouse"/>
</dbReference>
<dbReference type="PRO" id="PR:Q80U12"/>
<dbReference type="Proteomes" id="UP000000589">
    <property type="component" value="Chromosome 11"/>
</dbReference>
<dbReference type="RNAct" id="Q80U12">
    <property type="molecule type" value="protein"/>
</dbReference>
<dbReference type="Bgee" id="ENSMUSG00000038351">
    <property type="expression patterns" value="Expressed in dentate gyrus of hippocampal formation granule cell and 174 other cell types or tissues"/>
</dbReference>
<dbReference type="GO" id="GO:0042470">
    <property type="term" value="C:melanosome"/>
    <property type="evidence" value="ECO:0000314"/>
    <property type="project" value="UniProtKB"/>
</dbReference>
<dbReference type="GO" id="GO:0005096">
    <property type="term" value="F:GTPase activator activity"/>
    <property type="evidence" value="ECO:0000315"/>
    <property type="project" value="UniProtKB"/>
</dbReference>
<dbReference type="GO" id="GO:0031267">
    <property type="term" value="F:small GTPase binding"/>
    <property type="evidence" value="ECO:0007669"/>
    <property type="project" value="Ensembl"/>
</dbReference>
<dbReference type="GO" id="GO:0034499">
    <property type="term" value="P:late endosome to Golgi transport"/>
    <property type="evidence" value="ECO:0007669"/>
    <property type="project" value="Ensembl"/>
</dbReference>
<dbReference type="CDD" id="cd15784">
    <property type="entry name" value="PH_RUTBC"/>
    <property type="match status" value="1"/>
</dbReference>
<dbReference type="CDD" id="cd17704">
    <property type="entry name" value="RUN_SGSM2"/>
    <property type="match status" value="1"/>
</dbReference>
<dbReference type="FunFam" id="1.10.472.80:FF:000004">
    <property type="entry name" value="Small G protein signaling modulator 1"/>
    <property type="match status" value="1"/>
</dbReference>
<dbReference type="FunFam" id="1.20.58.900:FF:000002">
    <property type="entry name" value="small G protein signaling modulator 1"/>
    <property type="match status" value="1"/>
</dbReference>
<dbReference type="FunFam" id="1.10.8.270:FF:000006">
    <property type="entry name" value="Small G protein signaling modulator 2"/>
    <property type="match status" value="1"/>
</dbReference>
<dbReference type="FunFam" id="2.30.29.230:FF:000001">
    <property type="entry name" value="Small G protein signaling modulator 2"/>
    <property type="match status" value="1"/>
</dbReference>
<dbReference type="Gene3D" id="1.20.58.900">
    <property type="match status" value="1"/>
</dbReference>
<dbReference type="Gene3D" id="2.30.29.230">
    <property type="match status" value="1"/>
</dbReference>
<dbReference type="Gene3D" id="1.10.8.270">
    <property type="entry name" value="putative rabgap domain of human tbc1 domain family member 14 like domains"/>
    <property type="match status" value="1"/>
</dbReference>
<dbReference type="Gene3D" id="1.10.472.80">
    <property type="entry name" value="Ypt/Rab-GAP domain of gyp1p, domain 3"/>
    <property type="match status" value="1"/>
</dbReference>
<dbReference type="InterPro" id="IPR000195">
    <property type="entry name" value="Rab-GAP-TBC_dom"/>
</dbReference>
<dbReference type="InterPro" id="IPR035969">
    <property type="entry name" value="Rab-GAP_TBC_sf"/>
</dbReference>
<dbReference type="InterPro" id="IPR004012">
    <property type="entry name" value="Run_dom"/>
</dbReference>
<dbReference type="InterPro" id="IPR037213">
    <property type="entry name" value="Run_dom_sf"/>
</dbReference>
<dbReference type="InterPro" id="IPR047345">
    <property type="entry name" value="RUN_SGSM2"/>
</dbReference>
<dbReference type="InterPro" id="IPR037745">
    <property type="entry name" value="SGSM1/2"/>
</dbReference>
<dbReference type="InterPro" id="IPR021935">
    <property type="entry name" value="SGSM1/2_RBD"/>
</dbReference>
<dbReference type="PANTHER" id="PTHR22957:SF194">
    <property type="entry name" value="SMALL G PROTEIN SIGNALING MODULATOR 2"/>
    <property type="match status" value="1"/>
</dbReference>
<dbReference type="PANTHER" id="PTHR22957">
    <property type="entry name" value="TBC1 DOMAIN FAMILY MEMBER GTPASE-ACTIVATING PROTEIN"/>
    <property type="match status" value="1"/>
</dbReference>
<dbReference type="Pfam" id="PF12068">
    <property type="entry name" value="PH_RBD"/>
    <property type="match status" value="1"/>
</dbReference>
<dbReference type="Pfam" id="PF00566">
    <property type="entry name" value="RabGAP-TBC"/>
    <property type="match status" value="1"/>
</dbReference>
<dbReference type="Pfam" id="PF02759">
    <property type="entry name" value="RUN"/>
    <property type="match status" value="1"/>
</dbReference>
<dbReference type="SMART" id="SM00593">
    <property type="entry name" value="RUN"/>
    <property type="match status" value="1"/>
</dbReference>
<dbReference type="SMART" id="SM00164">
    <property type="entry name" value="TBC"/>
    <property type="match status" value="1"/>
</dbReference>
<dbReference type="SUPFAM" id="SSF140741">
    <property type="entry name" value="RUN domain-like"/>
    <property type="match status" value="1"/>
</dbReference>
<dbReference type="SUPFAM" id="SSF47923">
    <property type="entry name" value="Ypt/Rab-GAP domain of gyp1p"/>
    <property type="match status" value="2"/>
</dbReference>
<dbReference type="PROSITE" id="PS50826">
    <property type="entry name" value="RUN"/>
    <property type="match status" value="1"/>
</dbReference>
<dbReference type="PROSITE" id="PS50086">
    <property type="entry name" value="TBC_RABGAP"/>
    <property type="match status" value="1"/>
</dbReference>
<sequence>MGSAEDAVKEKLLWNVKKEVKQIMEEAVTRKFVHEDSSHIIALCGAVEACLLHQLRRRAAGFLRSDKMAALFTKVGKTCPVAEDICHKVQELQQQAEGRKPSGGSQEALRKQGSTGGKAPALSPQALKHIWVRTALMEKVLDRVVQYLAENCSKYYEKEALLADPVFGPILACLLVGPCALEYTKLKTADHYWTDPSADELVQRHRIRGPPNRQDSPAKRPALGIRKRHSSGSASEDRLAACAREYVESLHQNSRTRLLYGKNNVLVQPKEDMEAVPGYLSLHQSAENLTLKWTPNQLMNGTLGDSELEKSVYWDYALVVPFSQIVCIHCHQQKSGGTLVLVSQDGIQRPPLHFPQGGHLLSFLSCLENGLLPRGQLEPPLWTQQGKGKVFPKLRKRSSIRSIDVEELGVGRATDYVFRIIYPGHRHEHNAGDMIEMQGFGPSLTAWHLEPLCSQGSSCLSCSSSSSPYATPSHCSCIPDRLPLRLLCESMKRQIVSRAFYGWLAYCRHLSTVRTHLSALVHHNIIPPDRPPGASGGLTKDVWSKYQKDEKNYKELELLRQVYYGGVEHEIRKDVWPFLLGHYKFGMSKKEMEQVDTAVAARYQQVLAEWKACEVVVRQREREAHPATLTKFSSGSSIDSHVQRLVHRDSTISNDVFISVDDLEPSGPQDLEDSKPKREQEPGAGTPGIAAAEQQSVEFDSPDSGLPSSRNYSVASGIQSSLDEAQSVGFEDDGAGEDGSEGPATAAHTFPGPHDPGQETLAPASELEAGQELAAVCAAAYTIELLDTVALNLHRIDKDVQRCDRNYWYFTTSNLERLRDIMCSYVWEHLDMGYVQGMCDLLAPLLVILDNDQLAYSCFSHLMKRMGQNFPSGGAMDSHFANMRSLIQILDSELFELMHQNGDYTHFYFCYRWFLLDFKRELLYEDVFAVWEVIWAARRISSEHFVLFIALALVEAYREIIRDNNMDFTDIIKFFNERAERHDAQEILRIARDLVHKVQMLIDNK</sequence>
<reference key="1">
    <citation type="journal article" date="2003" name="DNA Res.">
        <title>Prediction of the coding sequences of mouse homologues of KIAA gene: II. The complete nucleotide sequences of 400 mouse KIAA-homologous cDNAs identified by screening of terminal sequences of cDNA clones randomly sampled from size-fractionated libraries.</title>
        <authorList>
            <person name="Okazaki N."/>
            <person name="Kikuno R."/>
            <person name="Ohara R."/>
            <person name="Inamoto S."/>
            <person name="Aizawa H."/>
            <person name="Yuasa S."/>
            <person name="Nakajima D."/>
            <person name="Nagase T."/>
            <person name="Ohara O."/>
            <person name="Koga H."/>
        </authorList>
    </citation>
    <scope>NUCLEOTIDE SEQUENCE [LARGE SCALE MRNA] (ISOFORM 1)</scope>
    <source>
        <tissue>Brain</tissue>
    </source>
</reference>
<reference key="2">
    <citation type="journal article" date="2009" name="PLoS Biol.">
        <title>Lineage-specific biology revealed by a finished genome assembly of the mouse.</title>
        <authorList>
            <person name="Church D.M."/>
            <person name="Goodstadt L."/>
            <person name="Hillier L.W."/>
            <person name="Zody M.C."/>
            <person name="Goldstein S."/>
            <person name="She X."/>
            <person name="Bult C.J."/>
            <person name="Agarwala R."/>
            <person name="Cherry J.L."/>
            <person name="DiCuccio M."/>
            <person name="Hlavina W."/>
            <person name="Kapustin Y."/>
            <person name="Meric P."/>
            <person name="Maglott D."/>
            <person name="Birtle Z."/>
            <person name="Marques A.C."/>
            <person name="Graves T."/>
            <person name="Zhou S."/>
            <person name="Teague B."/>
            <person name="Potamousis K."/>
            <person name="Churas C."/>
            <person name="Place M."/>
            <person name="Herschleb J."/>
            <person name="Runnheim R."/>
            <person name="Forrest D."/>
            <person name="Amos-Landgraf J."/>
            <person name="Schwartz D.C."/>
            <person name="Cheng Z."/>
            <person name="Lindblad-Toh K."/>
            <person name="Eichler E.E."/>
            <person name="Ponting C.P."/>
        </authorList>
    </citation>
    <scope>NUCLEOTIDE SEQUENCE [LARGE SCALE GENOMIC DNA]</scope>
    <source>
        <strain>C57BL/6J</strain>
    </source>
</reference>
<reference key="3">
    <citation type="journal article" date="2004" name="Genome Res.">
        <title>The status, quality, and expansion of the NIH full-length cDNA project: the Mammalian Gene Collection (MGC).</title>
        <authorList>
            <consortium name="The MGC Project Team"/>
        </authorList>
    </citation>
    <scope>NUCLEOTIDE SEQUENCE [LARGE SCALE MRNA] (ISOFORM 1)</scope>
    <source>
        <strain>C57BL/6J</strain>
        <tissue>Brain</tissue>
    </source>
</reference>
<reference key="4">
    <citation type="journal article" date="2007" name="Genomics">
        <title>Identification of three novel proteins (SGSM1, 2, 3) which modulate small G protein (RAP and RAB)-mediated signaling pathway.</title>
        <authorList>
            <person name="Yang H."/>
            <person name="Sasaki T."/>
            <person name="Minoshima S."/>
            <person name="Shimizu N."/>
        </authorList>
    </citation>
    <scope>TISSUE SPECIFICITY</scope>
</reference>
<reference key="5">
    <citation type="journal article" date="2010" name="Cell">
        <title>A tissue-specific atlas of mouse protein phosphorylation and expression.</title>
        <authorList>
            <person name="Huttlin E.L."/>
            <person name="Jedrychowski M.P."/>
            <person name="Elias J.E."/>
            <person name="Goswami T."/>
            <person name="Rad R."/>
            <person name="Beausoleil S.A."/>
            <person name="Villen J."/>
            <person name="Haas W."/>
            <person name="Sowa M.E."/>
            <person name="Gygi S.P."/>
        </authorList>
    </citation>
    <scope>PHOSPHORYLATION [LARGE SCALE ANALYSIS] AT SER-402</scope>
    <scope>PHOSPHORYLATION [LARGE SCALE ANALYSIS] AT SER-444 (ISOFORM 2)</scope>
    <scope>IDENTIFICATION BY MASS SPECTROMETRY [LARGE SCALE ANALYSIS]</scope>
    <source>
        <tissue>Brain</tissue>
    </source>
</reference>
<reference key="6">
    <citation type="journal article" date="2016" name="J. Biol. Chem.">
        <title>RUTBC1 functions as a GTPase-activating protein for Rab32/38 and regulates melanogenic enzyme trafficking in melanocytes.</title>
        <authorList>
            <person name="Marubashi S."/>
            <person name="Shimada H."/>
            <person name="Fukuda M."/>
            <person name="Ohbayashi N."/>
        </authorList>
    </citation>
    <scope>FUNCTION</scope>
    <scope>SUBCELLULAR LOCATION</scope>
</reference>
<gene>
    <name type="primary">Sgsm2</name>
    <name type="synonym">Kiaa0397</name>
    <name type="synonym">Rutbc1</name>
</gene>